<gene>
    <name type="primary">yejG</name>
    <name type="ordered locus">c2718</name>
</gene>
<keyword id="KW-1185">Reference proteome</keyword>
<name>YEJG_ECOL6</name>
<feature type="chain" id="PRO_0000169162" description="Uncharacterized protein YejG">
    <location>
        <begin position="1"/>
        <end position="114"/>
    </location>
</feature>
<organism>
    <name type="scientific">Escherichia coli O6:H1 (strain CFT073 / ATCC 700928 / UPEC)</name>
    <dbReference type="NCBI Taxonomy" id="199310"/>
    <lineage>
        <taxon>Bacteria</taxon>
        <taxon>Pseudomonadati</taxon>
        <taxon>Pseudomonadota</taxon>
        <taxon>Gammaproteobacteria</taxon>
        <taxon>Enterobacterales</taxon>
        <taxon>Enterobacteriaceae</taxon>
        <taxon>Escherichia</taxon>
    </lineage>
</organism>
<reference key="1">
    <citation type="journal article" date="2002" name="Proc. Natl. Acad. Sci. U.S.A.">
        <title>Extensive mosaic structure revealed by the complete genome sequence of uropathogenic Escherichia coli.</title>
        <authorList>
            <person name="Welch R.A."/>
            <person name="Burland V."/>
            <person name="Plunkett G. III"/>
            <person name="Redford P."/>
            <person name="Roesch P."/>
            <person name="Rasko D."/>
            <person name="Buckles E.L."/>
            <person name="Liou S.-R."/>
            <person name="Boutin A."/>
            <person name="Hackett J."/>
            <person name="Stroud D."/>
            <person name="Mayhew G.F."/>
            <person name="Rose D.J."/>
            <person name="Zhou S."/>
            <person name="Schwartz D.C."/>
            <person name="Perna N.T."/>
            <person name="Mobley H.L.T."/>
            <person name="Donnenberg M.S."/>
            <person name="Blattner F.R."/>
        </authorList>
    </citation>
    <scope>NUCLEOTIDE SEQUENCE [LARGE SCALE GENOMIC DNA]</scope>
    <source>
        <strain>CFT073 / ATCC 700928 / UPEC</strain>
    </source>
</reference>
<dbReference type="EMBL" id="AE014075">
    <property type="protein sequence ID" value="AAN81172.1"/>
    <property type="molecule type" value="Genomic_DNA"/>
</dbReference>
<dbReference type="RefSeq" id="WP_000202798.1">
    <property type="nucleotide sequence ID" value="NZ_CP051263.1"/>
</dbReference>
<dbReference type="SMR" id="P0AD22"/>
<dbReference type="STRING" id="199310.c2718"/>
<dbReference type="KEGG" id="ecc:c2718"/>
<dbReference type="eggNOG" id="ENOG5031IZZ">
    <property type="taxonomic scope" value="Bacteria"/>
</dbReference>
<dbReference type="HOGENOM" id="CLU_170187_0_0_6"/>
<dbReference type="BioCyc" id="ECOL199310:C2718-MONOMER"/>
<dbReference type="Proteomes" id="UP000001410">
    <property type="component" value="Chromosome"/>
</dbReference>
<dbReference type="InterPro" id="IPR020489">
    <property type="entry name" value="Uncharacterised_YejG"/>
</dbReference>
<dbReference type="NCBIfam" id="NF008811">
    <property type="entry name" value="PRK11835.1"/>
    <property type="match status" value="1"/>
</dbReference>
<dbReference type="Pfam" id="PF13989">
    <property type="entry name" value="YejG"/>
    <property type="match status" value="1"/>
</dbReference>
<protein>
    <recommendedName>
        <fullName>Uncharacterized protein YejG</fullName>
    </recommendedName>
</protein>
<sequence length="114" mass="12525">MTSLQLSIVHRLPQNYRWSAGFAGSKVEPIPQNGPCGDNSLVALKLLSPDGDNAWSVMYKLSQALSDIEVPCSVLECEGEPCLFVNRQDEFAATCRLKNFGVAIAEPFSNYNPF</sequence>
<accession>P0AD22</accession>
<accession>P33917</accession>
<proteinExistence type="predicted"/>